<feature type="chain" id="PRO_0000197055" description="Myb-related protein A">
    <location>
        <begin position="1"/>
        <end position="751"/>
    </location>
</feature>
<feature type="domain" description="HTH myb-type 1" evidence="3">
    <location>
        <begin position="30"/>
        <end position="81"/>
    </location>
</feature>
<feature type="domain" description="HTH myb-type 2" evidence="3">
    <location>
        <begin position="82"/>
        <end position="137"/>
    </location>
</feature>
<feature type="domain" description="HTH myb-type 3" evidence="3">
    <location>
        <begin position="138"/>
        <end position="188"/>
    </location>
</feature>
<feature type="DNA-binding region" description="H-T-H motif" evidence="3">
    <location>
        <begin position="58"/>
        <end position="81"/>
    </location>
</feature>
<feature type="DNA-binding region" description="H-T-H motif" evidence="3">
    <location>
        <begin position="110"/>
        <end position="133"/>
    </location>
</feature>
<feature type="DNA-binding region" description="H-T-H motif" evidence="3">
    <location>
        <begin position="161"/>
        <end position="184"/>
    </location>
</feature>
<feature type="region of interest" description="Disordered" evidence="4">
    <location>
        <begin position="1"/>
        <end position="22"/>
    </location>
</feature>
<feature type="region of interest" description="Transcriptional activation domain" evidence="1">
    <location>
        <begin position="230"/>
        <end position="294"/>
    </location>
</feature>
<feature type="region of interest" description="Negative regulatory domain" evidence="1">
    <location>
        <begin position="297"/>
        <end position="552"/>
    </location>
</feature>
<feature type="modified residue" description="N6-acetyllysine" evidence="2">
    <location>
        <position position="393"/>
    </location>
</feature>
<feature type="cross-link" description="Glycyl lysine isopeptide (Lys-Gly) (interchain with G-Cter in SUMO2)" evidence="2">
    <location>
        <position position="199"/>
    </location>
</feature>
<feature type="cross-link" description="Glycyl lysine isopeptide (Lys-Gly) (interchain with G-Cter in SUMO2)" evidence="2">
    <location>
        <position position="591"/>
    </location>
</feature>
<feature type="cross-link" description="Glycyl lysine isopeptide (Lys-Gly) (interchain with G-Cter in SUMO2)" evidence="2">
    <location>
        <position position="601"/>
    </location>
</feature>
<feature type="splice variant" id="VSP_003300" description="In isoform Short." evidence="11">
    <location>
        <begin position="649"/>
        <end position="708"/>
    </location>
</feature>
<feature type="sequence variant">
    <original>K</original>
    <variation>R</variation>
    <location>
        <position position="48"/>
    </location>
</feature>
<feature type="sequence variant">
    <original>M</original>
    <variation>V</variation>
    <location>
        <position position="404"/>
    </location>
</feature>
<feature type="sequence variant">
    <original>R</original>
    <variation>G</variation>
    <location>
        <position position="447"/>
    </location>
</feature>
<feature type="sequence variant">
    <original>L</original>
    <variation>P</variation>
    <location>
        <position position="708"/>
    </location>
</feature>
<feature type="mutagenesis site" description="In Repro9; male sterility due to defects in spermatogenesis. Impaired piRNA biogenesis." evidence="5 6">
    <original>A</original>
    <variation>E</variation>
    <location>
        <position position="213"/>
    </location>
</feature>
<feature type="sequence conflict" description="In Ref. 2; AAA62182." evidence="12" ref="2">
    <original>PR</original>
    <variation>AE</variation>
    <location>
        <begin position="358"/>
        <end position="359"/>
    </location>
</feature>
<feature type="sequence conflict" description="In Ref. 2; AAA62182." evidence="12" ref="2">
    <original>S</original>
    <variation>L</variation>
    <location>
        <position position="446"/>
    </location>
</feature>
<feature type="sequence conflict" description="In Ref. 2; AAA62182." evidence="12" ref="2">
    <original>SA</original>
    <variation>DG</variation>
    <location>
        <begin position="464"/>
        <end position="465"/>
    </location>
</feature>
<feature type="sequence conflict" description="In Ref. 2; AAA62182." evidence="12" ref="2">
    <original>RRI</original>
    <variation>AAL</variation>
    <location>
        <begin position="473"/>
        <end position="475"/>
    </location>
</feature>
<feature type="sequence conflict" description="In Ref. 1; CAA57771." evidence="12" ref="1">
    <original>L</original>
    <variation>LYCY</variation>
    <location>
        <position position="751"/>
    </location>
</feature>
<gene>
    <name type="primary">Mybl1</name>
    <name type="synonym">Amyb</name>
</gene>
<proteinExistence type="evidence at protein level"/>
<protein>
    <recommendedName>
        <fullName evidence="10">Myb-related protein A</fullName>
        <shortName evidence="10">A-Myb</shortName>
    </recommendedName>
    <alternativeName>
        <fullName>Myb-like protein 1</fullName>
    </alternativeName>
</protein>
<reference key="1">
    <citation type="journal article" date="1994" name="EMBO J.">
        <title>Mouse A-myb encodes a trans-activator and is expressed in mitotically active cells of the developing central nervous system, adult testis and B lymphocytes.</title>
        <authorList>
            <person name="Trauth K."/>
            <person name="Mutschler B."/>
            <person name="Jenkins N.A."/>
            <person name="Gilbert D.J."/>
            <person name="Copeland N.G."/>
            <person name="Klempnauer K.H."/>
        </authorList>
    </citation>
    <scope>NUCLEOTIDE SEQUENCE [MRNA] (ISOFORM LONG)</scope>
    <scope>FUNCTION</scope>
    <scope>TISSUE SPECIFICITY</scope>
    <source>
        <strain>BALB/cJ</strain>
    </source>
</reference>
<reference key="2">
    <citation type="journal article" date="1994" name="Oncogene">
        <title>Murine A-myb: evidence for differential splicing and tissue-specific expression.</title>
        <authorList>
            <person name="Mettus R.V."/>
            <person name="Litvin J."/>
            <person name="Wali A."/>
            <person name="Toscani A."/>
            <person name="Latham K."/>
            <person name="Hatton K."/>
            <person name="Reddy E.P."/>
        </authorList>
    </citation>
    <scope>NUCLEOTIDE SEQUENCE [MRNA] (ISOFORM SHORT)</scope>
    <scope>TISSUE SPECIFICITY</scope>
    <source>
        <strain>BALB/cJ</strain>
        <tissue>Testis</tissue>
    </source>
</reference>
<reference key="3">
    <citation type="journal article" date="2010" name="Cell">
        <title>A tissue-specific atlas of mouse protein phosphorylation and expression.</title>
        <authorList>
            <person name="Huttlin E.L."/>
            <person name="Jedrychowski M.P."/>
            <person name="Elias J.E."/>
            <person name="Goswami T."/>
            <person name="Rad R."/>
            <person name="Beausoleil S.A."/>
            <person name="Villen J."/>
            <person name="Haas W."/>
            <person name="Sowa M.E."/>
            <person name="Gygi S.P."/>
        </authorList>
    </citation>
    <scope>IDENTIFICATION BY MASS SPECTROMETRY [LARGE SCALE ANALYSIS]</scope>
    <source>
        <tissue>Testis</tissue>
    </source>
</reference>
<reference key="4">
    <citation type="journal article" date="2011" name="Development">
        <title>A-MYB (MYBL1) transcription factor is a master regulator of male meiosis.</title>
        <authorList>
            <person name="Bolcun-Filas E."/>
            <person name="Bannister L.A."/>
            <person name="Barash A."/>
            <person name="Schimenti K.J."/>
            <person name="Hartford S.A."/>
            <person name="Eppig J.J."/>
            <person name="Handel M.A."/>
            <person name="Shen L."/>
            <person name="Schimenti J.C."/>
        </authorList>
    </citation>
    <scope>FUNCTION</scope>
    <scope>SUBCELLULAR LOCATION</scope>
    <scope>DEVELOPMENTAL STAGE</scope>
    <scope>MUTAGENESIS OF ALA-213</scope>
</reference>
<reference key="5">
    <citation type="journal article" date="2013" name="Mol. Cell">
        <title>An ancient transcription factor initiates the burst of piRNA production during early meiosis in mouse testes.</title>
        <authorList>
            <person name="Li X.Z."/>
            <person name="Roy C.K."/>
            <person name="Dong X."/>
            <person name="Bolcun-Filas E."/>
            <person name="Wang J."/>
            <person name="Han B.W."/>
            <person name="Xu J."/>
            <person name="Moore M.J."/>
            <person name="Schimenti J.C."/>
            <person name="Weng Z."/>
            <person name="Zamore P.D."/>
        </authorList>
    </citation>
    <scope>FUNCTION</scope>
    <scope>MUTAGENESIS OF ALA-213</scope>
</reference>
<reference key="6">
    <citation type="journal article" date="2018" name="Development">
        <title>The transcription factor SOX30 is a key regulator of mouse spermiogenesis.</title>
        <authorList>
            <person name="Zhang D."/>
            <person name="Xie D."/>
            <person name="Lin X."/>
            <person name="Ma L."/>
            <person name="Chen J."/>
            <person name="Zhang D."/>
            <person name="Wang Y."/>
            <person name="Duo S."/>
            <person name="Feng Y."/>
            <person name="Zheng C."/>
            <person name="Jiang B."/>
            <person name="Ning Y."/>
            <person name="Han C."/>
        </authorList>
    </citation>
    <scope>FUNCTION</scope>
</reference>
<dbReference type="EMBL" id="X82327">
    <property type="protein sequence ID" value="CAA57771.1"/>
    <property type="molecule type" value="mRNA"/>
</dbReference>
<dbReference type="EMBL" id="L35261">
    <property type="protein sequence ID" value="AAA62182.1"/>
    <property type="molecule type" value="mRNA"/>
</dbReference>
<dbReference type="CCDS" id="CCDS35510.1">
    <molecule id="P51960-1"/>
</dbReference>
<dbReference type="CCDS" id="CCDS69861.1">
    <molecule id="P51960-2"/>
</dbReference>
<dbReference type="PIR" id="I49497">
    <property type="entry name" value="I49497"/>
</dbReference>
<dbReference type="RefSeq" id="NP_032677.2">
    <property type="nucleotide sequence ID" value="NM_008651.3"/>
</dbReference>
<dbReference type="SMR" id="P51960"/>
<dbReference type="FunCoup" id="P51960">
    <property type="interactions" value="2276"/>
</dbReference>
<dbReference type="STRING" id="10090.ENSMUSP00000086034"/>
<dbReference type="iPTMnet" id="P51960"/>
<dbReference type="PhosphoSitePlus" id="P51960"/>
<dbReference type="PaxDb" id="10090-ENSMUSP00000086034"/>
<dbReference type="ProteomicsDB" id="286091">
    <molecule id="P51960-1"/>
</dbReference>
<dbReference type="ProteomicsDB" id="286092">
    <molecule id="P51960-2"/>
</dbReference>
<dbReference type="DNASU" id="17864"/>
<dbReference type="GeneID" id="17864"/>
<dbReference type="KEGG" id="mmu:17864"/>
<dbReference type="AGR" id="MGI:99925"/>
<dbReference type="CTD" id="4603"/>
<dbReference type="MGI" id="MGI:99925">
    <property type="gene designation" value="Mybl1"/>
</dbReference>
<dbReference type="eggNOG" id="KOG0048">
    <property type="taxonomic scope" value="Eukaryota"/>
</dbReference>
<dbReference type="InParanoid" id="P51960"/>
<dbReference type="OrthoDB" id="2143914at2759"/>
<dbReference type="PhylomeDB" id="P51960"/>
<dbReference type="TreeFam" id="TF326257"/>
<dbReference type="BioGRID-ORCS" id="17864">
    <property type="hits" value="4 hits in 80 CRISPR screens"/>
</dbReference>
<dbReference type="ChiTaRS" id="Mybl1">
    <property type="organism name" value="mouse"/>
</dbReference>
<dbReference type="PRO" id="PR:P51960"/>
<dbReference type="Proteomes" id="UP000000589">
    <property type="component" value="Unplaced"/>
</dbReference>
<dbReference type="RNAct" id="P51960">
    <property type="molecule type" value="protein"/>
</dbReference>
<dbReference type="GO" id="GO:0005634">
    <property type="term" value="C:nucleus"/>
    <property type="evidence" value="ECO:0000314"/>
    <property type="project" value="UniProtKB"/>
</dbReference>
<dbReference type="GO" id="GO:0003677">
    <property type="term" value="F:DNA binding"/>
    <property type="evidence" value="ECO:0007669"/>
    <property type="project" value="UniProtKB-KW"/>
</dbReference>
<dbReference type="GO" id="GO:0001228">
    <property type="term" value="F:DNA-binding transcription activator activity, RNA polymerase II-specific"/>
    <property type="evidence" value="ECO:0000314"/>
    <property type="project" value="UniProtKB"/>
</dbReference>
<dbReference type="GO" id="GO:0000981">
    <property type="term" value="F:DNA-binding transcription factor activity, RNA polymerase II-specific"/>
    <property type="evidence" value="ECO:0000314"/>
    <property type="project" value="UniProtKB"/>
</dbReference>
<dbReference type="GO" id="GO:1990841">
    <property type="term" value="F:promoter-specific chromatin binding"/>
    <property type="evidence" value="ECO:0000314"/>
    <property type="project" value="MGI"/>
</dbReference>
<dbReference type="GO" id="GO:0030154">
    <property type="term" value="P:cell differentiation"/>
    <property type="evidence" value="ECO:0007669"/>
    <property type="project" value="UniProtKB-KW"/>
</dbReference>
<dbReference type="GO" id="GO:0007141">
    <property type="term" value="P:male meiosis I"/>
    <property type="evidence" value="ECO:0000315"/>
    <property type="project" value="UniProtKB"/>
</dbReference>
<dbReference type="GO" id="GO:0140543">
    <property type="term" value="P:positive regulation of piRNA transcription"/>
    <property type="evidence" value="ECO:0000314"/>
    <property type="project" value="UniProtKB"/>
</dbReference>
<dbReference type="GO" id="GO:0045944">
    <property type="term" value="P:positive regulation of transcription by RNA polymerase II"/>
    <property type="evidence" value="ECO:0000314"/>
    <property type="project" value="UniProtKB"/>
</dbReference>
<dbReference type="GO" id="GO:0007283">
    <property type="term" value="P:spermatogenesis"/>
    <property type="evidence" value="ECO:0000315"/>
    <property type="project" value="UniProtKB"/>
</dbReference>
<dbReference type="CDD" id="cd00167">
    <property type="entry name" value="SANT"/>
    <property type="match status" value="3"/>
</dbReference>
<dbReference type="FunFam" id="1.10.10.60:FF:000010">
    <property type="entry name" value="Transcriptional activator Myb isoform A"/>
    <property type="match status" value="1"/>
</dbReference>
<dbReference type="FunFam" id="1.10.10.60:FF:000016">
    <property type="entry name" value="Transcriptional activator Myb isoform A"/>
    <property type="match status" value="1"/>
</dbReference>
<dbReference type="FunFam" id="1.10.10.60:FF:000042">
    <property type="entry name" value="Transcriptional activator Myb isoform A"/>
    <property type="match status" value="1"/>
</dbReference>
<dbReference type="Gene3D" id="1.10.10.60">
    <property type="entry name" value="Homeodomain-like"/>
    <property type="match status" value="3"/>
</dbReference>
<dbReference type="InterPro" id="IPR015395">
    <property type="entry name" value="C-myb_C"/>
</dbReference>
<dbReference type="InterPro" id="IPR009057">
    <property type="entry name" value="Homeodomain-like_sf"/>
</dbReference>
<dbReference type="InterPro" id="IPR017930">
    <property type="entry name" value="Myb_dom"/>
</dbReference>
<dbReference type="InterPro" id="IPR050560">
    <property type="entry name" value="MYB_TF"/>
</dbReference>
<dbReference type="InterPro" id="IPR001005">
    <property type="entry name" value="SANT/Myb"/>
</dbReference>
<dbReference type="InterPro" id="IPR012642">
    <property type="entry name" value="Tscrpt_reg_Wos2-domain"/>
</dbReference>
<dbReference type="PANTHER" id="PTHR45614">
    <property type="entry name" value="MYB PROTEIN-RELATED"/>
    <property type="match status" value="1"/>
</dbReference>
<dbReference type="PANTHER" id="PTHR45614:SF265">
    <property type="entry name" value="MYB-LIKE DOMAIN-CONTAINING PROTEIN-RELATED"/>
    <property type="match status" value="1"/>
</dbReference>
<dbReference type="Pfam" id="PF09316">
    <property type="entry name" value="Cmyb_C"/>
    <property type="match status" value="1"/>
</dbReference>
<dbReference type="Pfam" id="PF07988">
    <property type="entry name" value="LMSTEN"/>
    <property type="match status" value="1"/>
</dbReference>
<dbReference type="Pfam" id="PF13921">
    <property type="entry name" value="Myb_DNA-bind_6"/>
    <property type="match status" value="1"/>
</dbReference>
<dbReference type="Pfam" id="PF00249">
    <property type="entry name" value="Myb_DNA-binding"/>
    <property type="match status" value="1"/>
</dbReference>
<dbReference type="SMART" id="SM00717">
    <property type="entry name" value="SANT"/>
    <property type="match status" value="3"/>
</dbReference>
<dbReference type="SUPFAM" id="SSF46689">
    <property type="entry name" value="Homeodomain-like"/>
    <property type="match status" value="2"/>
</dbReference>
<dbReference type="PROSITE" id="PS51294">
    <property type="entry name" value="HTH_MYB"/>
    <property type="match status" value="3"/>
</dbReference>
<evidence type="ECO:0000250" key="1"/>
<evidence type="ECO:0000250" key="2">
    <source>
        <dbReference type="UniProtKB" id="P10243"/>
    </source>
</evidence>
<evidence type="ECO:0000255" key="3">
    <source>
        <dbReference type="PROSITE-ProRule" id="PRU00625"/>
    </source>
</evidence>
<evidence type="ECO:0000256" key="4">
    <source>
        <dbReference type="SAM" id="MobiDB-lite"/>
    </source>
</evidence>
<evidence type="ECO:0000269" key="5">
    <source>
    </source>
</evidence>
<evidence type="ECO:0000269" key="6">
    <source>
    </source>
</evidence>
<evidence type="ECO:0000269" key="7">
    <source>
    </source>
</evidence>
<evidence type="ECO:0000269" key="8">
    <source>
    </source>
</evidence>
<evidence type="ECO:0000269" key="9">
    <source>
    </source>
</evidence>
<evidence type="ECO:0000303" key="10">
    <source>
    </source>
</evidence>
<evidence type="ECO:0000303" key="11">
    <source>
    </source>
</evidence>
<evidence type="ECO:0000305" key="12"/>
<comment type="function">
    <text evidence="5 6 7 8">Transcription factor that specifically recognizes the sequence 5'-YAAC[GT]G-3' (PubMed:23523368, PubMed:7813437). Acts as a master regulator of male meiosis by promoting expression of piRNAs: activates expression of both piRNA precursor RNAs and expression of protein-coding genes involved in piRNA metabolism, such as PIWIL1 (PubMed:21750041, PubMed:23523368). The piRNA metabolic process mediates the repression of transposable elements during meiosis by forming complexes composed of piRNAs and Piwi proteins and governs the methylation and subsequent repression of transposons, which is essential for the germline integrity (PubMed:23523368). Transcriptional activator of SOX30 (PubMed:29848638).</text>
</comment>
<comment type="subunit">
    <text evidence="2">Component of the DREAM complex (also named LINC complex) at least composed of E2F4, E2F5, LIN9, LIN37, LIN52, LIN54, MYBL1, MYBL2, RBL1, RBL2, RBBP4, TFDP1 and TFDP2. The complex exists in quiescent cells where it represses cell cycle-dependent genes. It dissociates in S phase when LIN9, LIN37, LIN52 and LIN54 form a subcomplex that binds to MYBL2 (By similarity).</text>
</comment>
<comment type="subcellular location">
    <subcellularLocation>
        <location evidence="5">Nucleus</location>
    </subcellularLocation>
</comment>
<comment type="alternative products">
    <event type="alternative splicing"/>
    <isoform>
        <id>P51960-1</id>
        <name>Long</name>
        <sequence type="displayed"/>
    </isoform>
    <isoform>
        <id>P51960-2</id>
        <name>Short</name>
        <sequence type="described" ref="VSP_003300"/>
    </isoform>
</comment>
<comment type="tissue specificity">
    <text evidence="8 9">Predominantly in the testis. Very low levels in the ovaries, spleen and brain.</text>
</comment>
<comment type="developmental stage">
    <text evidence="5 8 9">During embryogenesis it is predominantly expressed in several regions of the developing central nervous system and the urogenital ridge. Expression in the CNS is confined to the neural tube, the hindbrain, the neural retina and the olfactory epithelium, and coincides with the presence of proliferating immature neuronal precursor cells. In the adult mouse, A-Myb is expressed at high levels in type A spermatogonia (stem cells), and preleptotene and pachytene spermatocytes, with concomitant down-regulation of expression upon terminal differentiation of these cells into mature spermatozoa, and in B lymphocytes located in germinal centers of the spleen (PubMed:7813437, PubMed:8084617). Present in mid-late pachytene and diplotene spermatocytes, but not in late zygotene/early pachytene cells (at protein level) (PubMed:21750041).</text>
</comment>
<keyword id="KW-0007">Acetylation</keyword>
<keyword id="KW-0010">Activator</keyword>
<keyword id="KW-0025">Alternative splicing</keyword>
<keyword id="KW-0221">Differentiation</keyword>
<keyword id="KW-0238">DNA-binding</keyword>
<keyword id="KW-1017">Isopeptide bond</keyword>
<keyword id="KW-0539">Nucleus</keyword>
<keyword id="KW-1185">Reference proteome</keyword>
<keyword id="KW-0677">Repeat</keyword>
<keyword id="KW-0744">Spermatogenesis</keyword>
<keyword id="KW-0804">Transcription</keyword>
<keyword id="KW-0805">Transcription regulation</keyword>
<keyword id="KW-0832">Ubl conjugation</keyword>
<sequence length="751" mass="85728">MAKRSRSEDEDDDLQYADHDYEVPQQKGLKKLWNRVKWTRDEDDKLKKLVEQHGTDDWTLIASHLQNRSDFQCQHRWQKVLNPELIKGPWTKEEDQRVIELVQKYGPKRWSLIAKHLKGRIGKQCRERWHNHLNPEVKKSSWTEEEDRIIYEAHKRLGNRWAEIAKLLPGRTDNSIKNHWNSTMRRKVEQEGYLQDGIKSERSSSKLQHKPCATMDHLQTQNQFYIPVQIPGYQYVSPDGNCVEHVQTSAFIQQPFVDEDPDKEKKIKELELLLMSAENEVRRKRLPPQPGSFSSWSGSFLMDDSMSNTLNNLEEHTTEFYSMDENQTVSAQQNSPTKFLAVEANAVLSSLQTIPEFPRTLELIESDPVAWSDVTSFDLSDAAASPVKSTPVKLMRIQHNEGAMECQFNVSLVLEGKKNSRNGGDSEAIPLTSPNVVKFSTPPTISRKKKRIRVGQSAGSELGSASLSEVGNRRIKHTPVKTLPFSPSQFFNTCPGNEQLNIENPSFTSTPICGQKVLITTPLQKEATPKDQKENVGFRTPTIRRSILGTTPRTPTPFKNALAAQEKKYGPLKIVSQPLAFLEEDIREVLKEETGTDIFLKEEDEPAYKSCKQEHSASVKKVRKSLALESWDKEEPGTQLLTEDISDMQSENILTTSLLMIPLLEIHDNRCNLTPEKQDINSANKTYTLNKKRPNPNPCKAVKLEKSLQSNCEWETVVYGKTEDQLIMTEQARRYLSTYTATSSTSRALIL</sequence>
<organism>
    <name type="scientific">Mus musculus</name>
    <name type="common">Mouse</name>
    <dbReference type="NCBI Taxonomy" id="10090"/>
    <lineage>
        <taxon>Eukaryota</taxon>
        <taxon>Metazoa</taxon>
        <taxon>Chordata</taxon>
        <taxon>Craniata</taxon>
        <taxon>Vertebrata</taxon>
        <taxon>Euteleostomi</taxon>
        <taxon>Mammalia</taxon>
        <taxon>Eutheria</taxon>
        <taxon>Euarchontoglires</taxon>
        <taxon>Glires</taxon>
        <taxon>Rodentia</taxon>
        <taxon>Myomorpha</taxon>
        <taxon>Muroidea</taxon>
        <taxon>Muridae</taxon>
        <taxon>Murinae</taxon>
        <taxon>Mus</taxon>
        <taxon>Mus</taxon>
    </lineage>
</organism>
<accession>P51960</accession>
<name>MYBA_MOUSE</name>